<feature type="chain" id="PRO_1000066620" description="Acyl carrier protein">
    <location>
        <begin position="1"/>
        <end position="77"/>
    </location>
</feature>
<feature type="domain" description="Carrier" evidence="2">
    <location>
        <begin position="2"/>
        <end position="77"/>
    </location>
</feature>
<feature type="modified residue" description="O-(pantetheine 4'-phosphoryl)serine" evidence="2">
    <location>
        <position position="37"/>
    </location>
</feature>
<keyword id="KW-0963">Cytoplasm</keyword>
<keyword id="KW-0275">Fatty acid biosynthesis</keyword>
<keyword id="KW-0276">Fatty acid metabolism</keyword>
<keyword id="KW-0444">Lipid biosynthesis</keyword>
<keyword id="KW-0443">Lipid metabolism</keyword>
<keyword id="KW-0596">Phosphopantetheine</keyword>
<keyword id="KW-0597">Phosphoprotein</keyword>
<keyword id="KW-1185">Reference proteome</keyword>
<gene>
    <name evidence="1" type="primary">acpP</name>
    <name type="ordered locus">HCH_02145</name>
</gene>
<sequence length="77" mass="8620">MSTVEERVKKIVCEQLGVKEGDVQLTSKFVEDLGADSLDTVELVMALEEEFETEIPDEEAEKITTVQDAIDYILANQ</sequence>
<evidence type="ECO:0000255" key="1">
    <source>
        <dbReference type="HAMAP-Rule" id="MF_01217"/>
    </source>
</evidence>
<evidence type="ECO:0000255" key="2">
    <source>
        <dbReference type="PROSITE-ProRule" id="PRU00258"/>
    </source>
</evidence>
<reference key="1">
    <citation type="journal article" date="2005" name="Nucleic Acids Res.">
        <title>Genomic blueprint of Hahella chejuensis, a marine microbe producing an algicidal agent.</title>
        <authorList>
            <person name="Jeong H."/>
            <person name="Yim J.H."/>
            <person name="Lee C."/>
            <person name="Choi S.-H."/>
            <person name="Park Y.K."/>
            <person name="Yoon S.H."/>
            <person name="Hur C.-G."/>
            <person name="Kang H.-Y."/>
            <person name="Kim D."/>
            <person name="Lee H.H."/>
            <person name="Park K.H."/>
            <person name="Park S.-H."/>
            <person name="Park H.-S."/>
            <person name="Lee H.K."/>
            <person name="Oh T.K."/>
            <person name="Kim J.F."/>
        </authorList>
    </citation>
    <scope>NUCLEOTIDE SEQUENCE [LARGE SCALE GENOMIC DNA]</scope>
    <source>
        <strain>KCTC 2396</strain>
    </source>
</reference>
<comment type="function">
    <text evidence="1">Carrier of the growing fatty acid chain in fatty acid biosynthesis.</text>
</comment>
<comment type="pathway">
    <text evidence="1">Lipid metabolism; fatty acid biosynthesis.</text>
</comment>
<comment type="subcellular location">
    <subcellularLocation>
        <location evidence="1">Cytoplasm</location>
    </subcellularLocation>
</comment>
<comment type="PTM">
    <text evidence="1">4'-phosphopantetheine is transferred from CoA to a specific serine of apo-ACP by AcpS. This modification is essential for activity because fatty acids are bound in thioester linkage to the sulfhydryl of the prosthetic group.</text>
</comment>
<comment type="similarity">
    <text evidence="1">Belongs to the acyl carrier protein (ACP) family.</text>
</comment>
<name>ACP_HAHCH</name>
<dbReference type="EMBL" id="CP000155">
    <property type="protein sequence ID" value="ABC28975.1"/>
    <property type="molecule type" value="Genomic_DNA"/>
</dbReference>
<dbReference type="RefSeq" id="WP_011396045.1">
    <property type="nucleotide sequence ID" value="NC_007645.1"/>
</dbReference>
<dbReference type="SMR" id="Q2SK49"/>
<dbReference type="STRING" id="349521.HCH_02145"/>
<dbReference type="KEGG" id="hch:HCH_02145"/>
<dbReference type="eggNOG" id="COG0236">
    <property type="taxonomic scope" value="Bacteria"/>
</dbReference>
<dbReference type="HOGENOM" id="CLU_108696_5_1_6"/>
<dbReference type="OrthoDB" id="9804551at2"/>
<dbReference type="UniPathway" id="UPA00094"/>
<dbReference type="Proteomes" id="UP000000238">
    <property type="component" value="Chromosome"/>
</dbReference>
<dbReference type="GO" id="GO:0005829">
    <property type="term" value="C:cytosol"/>
    <property type="evidence" value="ECO:0007669"/>
    <property type="project" value="TreeGrafter"/>
</dbReference>
<dbReference type="GO" id="GO:0016020">
    <property type="term" value="C:membrane"/>
    <property type="evidence" value="ECO:0007669"/>
    <property type="project" value="GOC"/>
</dbReference>
<dbReference type="GO" id="GO:0000035">
    <property type="term" value="F:acyl binding"/>
    <property type="evidence" value="ECO:0007669"/>
    <property type="project" value="TreeGrafter"/>
</dbReference>
<dbReference type="GO" id="GO:0000036">
    <property type="term" value="F:acyl carrier activity"/>
    <property type="evidence" value="ECO:0007669"/>
    <property type="project" value="UniProtKB-UniRule"/>
</dbReference>
<dbReference type="GO" id="GO:0009245">
    <property type="term" value="P:lipid A biosynthetic process"/>
    <property type="evidence" value="ECO:0007669"/>
    <property type="project" value="TreeGrafter"/>
</dbReference>
<dbReference type="FunFam" id="1.10.1200.10:FF:000001">
    <property type="entry name" value="Acyl carrier protein"/>
    <property type="match status" value="1"/>
</dbReference>
<dbReference type="Gene3D" id="1.10.1200.10">
    <property type="entry name" value="ACP-like"/>
    <property type="match status" value="1"/>
</dbReference>
<dbReference type="HAMAP" id="MF_01217">
    <property type="entry name" value="Acyl_carrier"/>
    <property type="match status" value="1"/>
</dbReference>
<dbReference type="InterPro" id="IPR003231">
    <property type="entry name" value="ACP"/>
</dbReference>
<dbReference type="InterPro" id="IPR036736">
    <property type="entry name" value="ACP-like_sf"/>
</dbReference>
<dbReference type="InterPro" id="IPR009081">
    <property type="entry name" value="PP-bd_ACP"/>
</dbReference>
<dbReference type="InterPro" id="IPR006162">
    <property type="entry name" value="Ppantetheine_attach_site"/>
</dbReference>
<dbReference type="NCBIfam" id="TIGR00517">
    <property type="entry name" value="acyl_carrier"/>
    <property type="match status" value="1"/>
</dbReference>
<dbReference type="NCBIfam" id="NF002148">
    <property type="entry name" value="PRK00982.1-2"/>
    <property type="match status" value="1"/>
</dbReference>
<dbReference type="NCBIfam" id="NF002149">
    <property type="entry name" value="PRK00982.1-3"/>
    <property type="match status" value="1"/>
</dbReference>
<dbReference type="NCBIfam" id="NF002150">
    <property type="entry name" value="PRK00982.1-4"/>
    <property type="match status" value="1"/>
</dbReference>
<dbReference type="NCBIfam" id="NF002151">
    <property type="entry name" value="PRK00982.1-5"/>
    <property type="match status" value="1"/>
</dbReference>
<dbReference type="PANTHER" id="PTHR20863">
    <property type="entry name" value="ACYL CARRIER PROTEIN"/>
    <property type="match status" value="1"/>
</dbReference>
<dbReference type="PANTHER" id="PTHR20863:SF76">
    <property type="entry name" value="CARRIER DOMAIN-CONTAINING PROTEIN"/>
    <property type="match status" value="1"/>
</dbReference>
<dbReference type="Pfam" id="PF00550">
    <property type="entry name" value="PP-binding"/>
    <property type="match status" value="1"/>
</dbReference>
<dbReference type="SUPFAM" id="SSF47336">
    <property type="entry name" value="ACP-like"/>
    <property type="match status" value="1"/>
</dbReference>
<dbReference type="PROSITE" id="PS50075">
    <property type="entry name" value="CARRIER"/>
    <property type="match status" value="1"/>
</dbReference>
<dbReference type="PROSITE" id="PS00012">
    <property type="entry name" value="PHOSPHOPANTETHEINE"/>
    <property type="match status" value="1"/>
</dbReference>
<protein>
    <recommendedName>
        <fullName evidence="1">Acyl carrier protein</fullName>
        <shortName evidence="1">ACP</shortName>
    </recommendedName>
</protein>
<accession>Q2SK49</accession>
<proteinExistence type="inferred from homology"/>
<organism>
    <name type="scientific">Hahella chejuensis (strain KCTC 2396)</name>
    <dbReference type="NCBI Taxonomy" id="349521"/>
    <lineage>
        <taxon>Bacteria</taxon>
        <taxon>Pseudomonadati</taxon>
        <taxon>Pseudomonadota</taxon>
        <taxon>Gammaproteobacteria</taxon>
        <taxon>Oceanospirillales</taxon>
        <taxon>Hahellaceae</taxon>
        <taxon>Hahella</taxon>
    </lineage>
</organism>